<reference key="1">
    <citation type="submission" date="2006-11" db="EMBL/GenBank/DDBJ databases">
        <title>Sequence of Campylobacter fetus subsp. fetus 82-40.</title>
        <authorList>
            <person name="Fouts D.E."/>
            <person name="Nelson K.E."/>
        </authorList>
    </citation>
    <scope>NUCLEOTIDE SEQUENCE [LARGE SCALE GENOMIC DNA]</scope>
    <source>
        <strain>82-40</strain>
    </source>
</reference>
<keyword id="KW-1005">Bacterial flagellum biogenesis</keyword>
<keyword id="KW-0143">Chaperone</keyword>
<keyword id="KW-0963">Cytoplasm</keyword>
<keyword id="KW-0810">Translation regulation</keyword>
<evidence type="ECO:0000255" key="1">
    <source>
        <dbReference type="HAMAP-Rule" id="MF_01185"/>
    </source>
</evidence>
<proteinExistence type="inferred from homology"/>
<gene>
    <name evidence="1" type="primary">fliW</name>
    <name type="ordered locus">CFF8240_1068</name>
</gene>
<accession>A0RPU6</accession>
<sequence length="128" mass="14703">MTFSVKSPILGFEGIKNVEITKIDDFFVKMQDKDGDTSFTMINPYSLRNYEFDIPTYYQDLMQISDKSELQVYNMLVISSPIEESSVNFMAPIVCNTTNMTLSQVILDPVNYPQYSQAEKISTLLKKK</sequence>
<dbReference type="EMBL" id="CP000487">
    <property type="protein sequence ID" value="ABK83157.1"/>
    <property type="molecule type" value="Genomic_DNA"/>
</dbReference>
<dbReference type="RefSeq" id="WP_002849638.1">
    <property type="nucleotide sequence ID" value="NC_008599.1"/>
</dbReference>
<dbReference type="SMR" id="A0RPU6"/>
<dbReference type="GeneID" id="61064895"/>
<dbReference type="KEGG" id="cff:CFF8240_1068"/>
<dbReference type="eggNOG" id="COG1699">
    <property type="taxonomic scope" value="Bacteria"/>
</dbReference>
<dbReference type="HOGENOM" id="CLU_112356_2_0_7"/>
<dbReference type="Proteomes" id="UP000000760">
    <property type="component" value="Chromosome"/>
</dbReference>
<dbReference type="GO" id="GO:0005737">
    <property type="term" value="C:cytoplasm"/>
    <property type="evidence" value="ECO:0007669"/>
    <property type="project" value="UniProtKB-SubCell"/>
</dbReference>
<dbReference type="GO" id="GO:0044780">
    <property type="term" value="P:bacterial-type flagellum assembly"/>
    <property type="evidence" value="ECO:0007669"/>
    <property type="project" value="UniProtKB-UniRule"/>
</dbReference>
<dbReference type="GO" id="GO:0006417">
    <property type="term" value="P:regulation of translation"/>
    <property type="evidence" value="ECO:0007669"/>
    <property type="project" value="UniProtKB-KW"/>
</dbReference>
<dbReference type="Gene3D" id="2.30.290.10">
    <property type="entry name" value="BH3618-like"/>
    <property type="match status" value="1"/>
</dbReference>
<dbReference type="HAMAP" id="MF_01185">
    <property type="entry name" value="FliW"/>
    <property type="match status" value="1"/>
</dbReference>
<dbReference type="InterPro" id="IPR003775">
    <property type="entry name" value="Flagellar_assembly_factor_FliW"/>
</dbReference>
<dbReference type="InterPro" id="IPR024046">
    <property type="entry name" value="Flagellar_assmbl_FliW_dom_sf"/>
</dbReference>
<dbReference type="NCBIfam" id="NF009790">
    <property type="entry name" value="PRK13282.1"/>
    <property type="match status" value="1"/>
</dbReference>
<dbReference type="PANTHER" id="PTHR39190">
    <property type="entry name" value="FLAGELLAR ASSEMBLY FACTOR FLIW"/>
    <property type="match status" value="1"/>
</dbReference>
<dbReference type="PANTHER" id="PTHR39190:SF1">
    <property type="entry name" value="FLAGELLAR ASSEMBLY FACTOR FLIW"/>
    <property type="match status" value="1"/>
</dbReference>
<dbReference type="Pfam" id="PF02623">
    <property type="entry name" value="FliW"/>
    <property type="match status" value="1"/>
</dbReference>
<dbReference type="SUPFAM" id="SSF141457">
    <property type="entry name" value="BH3618-like"/>
    <property type="match status" value="1"/>
</dbReference>
<organism>
    <name type="scientific">Campylobacter fetus subsp. fetus (strain 82-40)</name>
    <dbReference type="NCBI Taxonomy" id="360106"/>
    <lineage>
        <taxon>Bacteria</taxon>
        <taxon>Pseudomonadati</taxon>
        <taxon>Campylobacterota</taxon>
        <taxon>Epsilonproteobacteria</taxon>
        <taxon>Campylobacterales</taxon>
        <taxon>Campylobacteraceae</taxon>
        <taxon>Campylobacter</taxon>
    </lineage>
</organism>
<name>FLIW_CAMFF</name>
<protein>
    <recommendedName>
        <fullName evidence="1">Flagellar assembly factor FliW</fullName>
    </recommendedName>
</protein>
<comment type="function">
    <text evidence="1">Acts as an anti-CsrA protein, binds CsrA and prevents it from repressing translation of its target genes, one of which is flagellin. Binds to flagellin and participates in the assembly of the flagellum.</text>
</comment>
<comment type="subunit">
    <text evidence="1">Interacts with translational regulator CsrA and flagellin(s).</text>
</comment>
<comment type="subcellular location">
    <subcellularLocation>
        <location evidence="1">Cytoplasm</location>
    </subcellularLocation>
</comment>
<comment type="similarity">
    <text evidence="1">Belongs to the FliW family.</text>
</comment>
<feature type="chain" id="PRO_1000065810" description="Flagellar assembly factor FliW">
    <location>
        <begin position="1"/>
        <end position="128"/>
    </location>
</feature>